<organism>
    <name type="scientific">Alkaliphilus metalliredigens (strain QYMF)</name>
    <dbReference type="NCBI Taxonomy" id="293826"/>
    <lineage>
        <taxon>Bacteria</taxon>
        <taxon>Bacillati</taxon>
        <taxon>Bacillota</taxon>
        <taxon>Clostridia</taxon>
        <taxon>Peptostreptococcales</taxon>
        <taxon>Natronincolaceae</taxon>
        <taxon>Alkaliphilus</taxon>
    </lineage>
</organism>
<proteinExistence type="inferred from homology"/>
<feature type="chain" id="PRO_1000067117" description="HPr kinase/phosphorylase">
    <location>
        <begin position="1"/>
        <end position="309"/>
    </location>
</feature>
<feature type="region of interest" description="Important for the catalytic mechanism of both phosphorylation and dephosphorylation" evidence="1">
    <location>
        <begin position="201"/>
        <end position="210"/>
    </location>
</feature>
<feature type="region of interest" description="Important for the catalytic mechanism of dephosphorylation" evidence="1">
    <location>
        <begin position="264"/>
        <end position="269"/>
    </location>
</feature>
<feature type="active site" evidence="1">
    <location>
        <position position="138"/>
    </location>
</feature>
<feature type="active site" evidence="1">
    <location>
        <position position="159"/>
    </location>
</feature>
<feature type="active site" description="Proton acceptor; for phosphorylation activity. Proton donor; for dephosphorylation activity" evidence="1">
    <location>
        <position position="177"/>
    </location>
</feature>
<feature type="active site" evidence="1">
    <location>
        <position position="243"/>
    </location>
</feature>
<feature type="binding site" evidence="1">
    <location>
        <begin position="153"/>
        <end position="160"/>
    </location>
    <ligand>
        <name>ATP</name>
        <dbReference type="ChEBI" id="CHEBI:30616"/>
    </ligand>
</feature>
<feature type="binding site" evidence="1">
    <location>
        <position position="160"/>
    </location>
    <ligand>
        <name>Mg(2+)</name>
        <dbReference type="ChEBI" id="CHEBI:18420"/>
    </ligand>
</feature>
<feature type="binding site" evidence="1">
    <location>
        <position position="202"/>
    </location>
    <ligand>
        <name>Mg(2+)</name>
        <dbReference type="ChEBI" id="CHEBI:18420"/>
    </ligand>
</feature>
<dbReference type="EC" id="2.7.11.-" evidence="1"/>
<dbReference type="EC" id="2.7.4.-" evidence="1"/>
<dbReference type="EMBL" id="CP000724">
    <property type="protein sequence ID" value="ABR50203.1"/>
    <property type="molecule type" value="Genomic_DNA"/>
</dbReference>
<dbReference type="RefSeq" id="WP_012065151.1">
    <property type="nucleotide sequence ID" value="NC_009633.1"/>
</dbReference>
<dbReference type="SMR" id="A6TVI5"/>
<dbReference type="STRING" id="293826.Amet_4122"/>
<dbReference type="KEGG" id="amt:Amet_4122"/>
<dbReference type="eggNOG" id="COG1493">
    <property type="taxonomic scope" value="Bacteria"/>
</dbReference>
<dbReference type="HOGENOM" id="CLU_052030_0_1_9"/>
<dbReference type="OrthoDB" id="9778803at2"/>
<dbReference type="Proteomes" id="UP000001572">
    <property type="component" value="Chromosome"/>
</dbReference>
<dbReference type="GO" id="GO:0005524">
    <property type="term" value="F:ATP binding"/>
    <property type="evidence" value="ECO:0007669"/>
    <property type="project" value="UniProtKB-UniRule"/>
</dbReference>
<dbReference type="GO" id="GO:0000287">
    <property type="term" value="F:magnesium ion binding"/>
    <property type="evidence" value="ECO:0007669"/>
    <property type="project" value="UniProtKB-UniRule"/>
</dbReference>
<dbReference type="GO" id="GO:0000155">
    <property type="term" value="F:phosphorelay sensor kinase activity"/>
    <property type="evidence" value="ECO:0007669"/>
    <property type="project" value="InterPro"/>
</dbReference>
<dbReference type="GO" id="GO:0004674">
    <property type="term" value="F:protein serine/threonine kinase activity"/>
    <property type="evidence" value="ECO:0007669"/>
    <property type="project" value="UniProtKB-KW"/>
</dbReference>
<dbReference type="GO" id="GO:0004712">
    <property type="term" value="F:protein serine/threonine/tyrosine kinase activity"/>
    <property type="evidence" value="ECO:0007669"/>
    <property type="project" value="UniProtKB-UniRule"/>
</dbReference>
<dbReference type="GO" id="GO:0006109">
    <property type="term" value="P:regulation of carbohydrate metabolic process"/>
    <property type="evidence" value="ECO:0007669"/>
    <property type="project" value="UniProtKB-UniRule"/>
</dbReference>
<dbReference type="CDD" id="cd01918">
    <property type="entry name" value="HprK_C"/>
    <property type="match status" value="1"/>
</dbReference>
<dbReference type="FunFam" id="3.40.50.300:FF:000174">
    <property type="entry name" value="HPr kinase/phosphorylase"/>
    <property type="match status" value="1"/>
</dbReference>
<dbReference type="Gene3D" id="3.40.1390.20">
    <property type="entry name" value="HprK N-terminal domain-like"/>
    <property type="match status" value="1"/>
</dbReference>
<dbReference type="Gene3D" id="3.40.50.300">
    <property type="entry name" value="P-loop containing nucleotide triphosphate hydrolases"/>
    <property type="match status" value="1"/>
</dbReference>
<dbReference type="HAMAP" id="MF_01249">
    <property type="entry name" value="HPr_kinase"/>
    <property type="match status" value="1"/>
</dbReference>
<dbReference type="InterPro" id="IPR003755">
    <property type="entry name" value="HPr(Ser)_kin/Pase"/>
</dbReference>
<dbReference type="InterPro" id="IPR011104">
    <property type="entry name" value="Hpr_kin/Pase_C"/>
</dbReference>
<dbReference type="InterPro" id="IPR011126">
    <property type="entry name" value="Hpr_kin/Pase_Hpr_N"/>
</dbReference>
<dbReference type="InterPro" id="IPR027417">
    <property type="entry name" value="P-loop_NTPase"/>
</dbReference>
<dbReference type="InterPro" id="IPR028979">
    <property type="entry name" value="Ser_kin/Pase_Hpr-like_N_sf"/>
</dbReference>
<dbReference type="NCBIfam" id="TIGR00679">
    <property type="entry name" value="hpr-ser"/>
    <property type="match status" value="1"/>
</dbReference>
<dbReference type="PANTHER" id="PTHR30305:SF1">
    <property type="entry name" value="HPR KINASE_PHOSPHORYLASE"/>
    <property type="match status" value="1"/>
</dbReference>
<dbReference type="PANTHER" id="PTHR30305">
    <property type="entry name" value="PROTEIN YJDM-RELATED"/>
    <property type="match status" value="1"/>
</dbReference>
<dbReference type="Pfam" id="PF07475">
    <property type="entry name" value="Hpr_kinase_C"/>
    <property type="match status" value="1"/>
</dbReference>
<dbReference type="Pfam" id="PF02603">
    <property type="entry name" value="Hpr_kinase_N"/>
    <property type="match status" value="1"/>
</dbReference>
<dbReference type="SUPFAM" id="SSF75138">
    <property type="entry name" value="HprK N-terminal domain-like"/>
    <property type="match status" value="1"/>
</dbReference>
<dbReference type="SUPFAM" id="SSF53795">
    <property type="entry name" value="PEP carboxykinase-like"/>
    <property type="match status" value="1"/>
</dbReference>
<evidence type="ECO:0000255" key="1">
    <source>
        <dbReference type="HAMAP-Rule" id="MF_01249"/>
    </source>
</evidence>
<gene>
    <name evidence="1" type="primary">hprK</name>
    <name type="ordered locus">Amet_4122</name>
</gene>
<comment type="function">
    <text evidence="1">Catalyzes the ATP- as well as the pyrophosphate-dependent phosphorylation of a specific serine residue in HPr, a phosphocarrier protein of the phosphoenolpyruvate-dependent sugar phosphotransferase system (PTS). HprK/P also catalyzes the pyrophosphate-producing, inorganic phosphate-dependent dephosphorylation (phosphorolysis) of seryl-phosphorylated HPr (P-Ser-HPr). The two antagonistic activities of HprK/P are regulated by several intracellular metabolites, which change their concentration in response to the absence or presence of rapidly metabolisable carbon sources (glucose, fructose, etc.) in the growth medium. Therefore, by controlling the phosphorylation state of HPr, HPrK/P is a sensor enzyme that plays a major role in the regulation of carbon metabolism and sugar transport: it mediates carbon catabolite repression (CCR), and regulates PTS-catalyzed carbohydrate uptake and inducer exclusion.</text>
</comment>
<comment type="catalytic activity">
    <reaction evidence="1">
        <text>[HPr protein]-L-serine + ATP = [HPr protein]-O-phospho-L-serine + ADP + H(+)</text>
        <dbReference type="Rhea" id="RHEA:46600"/>
        <dbReference type="Rhea" id="RHEA-COMP:11602"/>
        <dbReference type="Rhea" id="RHEA-COMP:11603"/>
        <dbReference type="ChEBI" id="CHEBI:15378"/>
        <dbReference type="ChEBI" id="CHEBI:29999"/>
        <dbReference type="ChEBI" id="CHEBI:30616"/>
        <dbReference type="ChEBI" id="CHEBI:83421"/>
        <dbReference type="ChEBI" id="CHEBI:456216"/>
    </reaction>
</comment>
<comment type="catalytic activity">
    <reaction evidence="1">
        <text>[HPr protein]-O-phospho-L-serine + phosphate + H(+) = [HPr protein]-L-serine + diphosphate</text>
        <dbReference type="Rhea" id="RHEA:46604"/>
        <dbReference type="Rhea" id="RHEA-COMP:11602"/>
        <dbReference type="Rhea" id="RHEA-COMP:11603"/>
        <dbReference type="ChEBI" id="CHEBI:15378"/>
        <dbReference type="ChEBI" id="CHEBI:29999"/>
        <dbReference type="ChEBI" id="CHEBI:33019"/>
        <dbReference type="ChEBI" id="CHEBI:43474"/>
        <dbReference type="ChEBI" id="CHEBI:83421"/>
    </reaction>
</comment>
<comment type="cofactor">
    <cofactor evidence="1">
        <name>Mg(2+)</name>
        <dbReference type="ChEBI" id="CHEBI:18420"/>
    </cofactor>
</comment>
<comment type="subunit">
    <text evidence="1">Homohexamer.</text>
</comment>
<comment type="domain">
    <text evidence="1">The Walker A ATP-binding motif also binds Pi and PPi.</text>
</comment>
<comment type="miscellaneous">
    <text evidence="1">Both phosphorylation and phosphorolysis are carried out by the same active site and suggest a common mechanism for both reactions.</text>
</comment>
<comment type="similarity">
    <text evidence="1">Belongs to the HPrK/P family.</text>
</comment>
<protein>
    <recommendedName>
        <fullName evidence="1">HPr kinase/phosphorylase</fullName>
        <shortName evidence="1">HPrK/P</shortName>
        <ecNumber evidence="1">2.7.11.-</ecNumber>
        <ecNumber evidence="1">2.7.4.-</ecNumber>
    </recommendedName>
    <alternativeName>
        <fullName evidence="1">HPr(Ser) kinase/phosphorylase</fullName>
    </alternativeName>
</protein>
<keyword id="KW-0067">ATP-binding</keyword>
<keyword id="KW-0119">Carbohydrate metabolism</keyword>
<keyword id="KW-0418">Kinase</keyword>
<keyword id="KW-0460">Magnesium</keyword>
<keyword id="KW-0479">Metal-binding</keyword>
<keyword id="KW-0511">Multifunctional enzyme</keyword>
<keyword id="KW-0547">Nucleotide-binding</keyword>
<keyword id="KW-1185">Reference proteome</keyword>
<keyword id="KW-0723">Serine/threonine-protein kinase</keyword>
<keyword id="KW-0808">Transferase</keyword>
<accession>A6TVI5</accession>
<sequence>MKSITVEKLMKDLNMEELNSIEATALLISTTDLNRPGMQLAGFFDYFAYERIQIIGKVEHRYLETLDTKTRKERLDRMMSYDIPCLIISRGLEVPEELLCTANKYQRKILRSHKNTTKLISKVINYLEDTLAPTITLHGVLMDIYGVGVLITGKSGIGKSETAVELIKRGHLLVADDAVEIKRIGHEVLQGCAPEIIRHMIEVRGIGILDVKSLFGVGAIKIKTDIDLIIDLEEWDSTKSYDRLGLDDNHREILGMKIDEVTIPIKPARNIALIIEVAARNHRQKKMGYHAAQEFNDRLMKSLEEKSQQ</sequence>
<reference key="1">
    <citation type="journal article" date="2016" name="Genome Announc.">
        <title>Complete genome sequence of Alkaliphilus metalliredigens strain QYMF, an alkaliphilic and metal-reducing bacterium isolated from borax-contaminated leachate ponds.</title>
        <authorList>
            <person name="Hwang C."/>
            <person name="Copeland A."/>
            <person name="Lucas S."/>
            <person name="Lapidus A."/>
            <person name="Barry K."/>
            <person name="Detter J.C."/>
            <person name="Glavina Del Rio T."/>
            <person name="Hammon N."/>
            <person name="Israni S."/>
            <person name="Dalin E."/>
            <person name="Tice H."/>
            <person name="Pitluck S."/>
            <person name="Chertkov O."/>
            <person name="Brettin T."/>
            <person name="Bruce D."/>
            <person name="Han C."/>
            <person name="Schmutz J."/>
            <person name="Larimer F."/>
            <person name="Land M.L."/>
            <person name="Hauser L."/>
            <person name="Kyrpides N."/>
            <person name="Mikhailova N."/>
            <person name="Ye Q."/>
            <person name="Zhou J."/>
            <person name="Richardson P."/>
            <person name="Fields M.W."/>
        </authorList>
    </citation>
    <scope>NUCLEOTIDE SEQUENCE [LARGE SCALE GENOMIC DNA]</scope>
    <source>
        <strain>QYMF</strain>
    </source>
</reference>
<name>HPRK_ALKMQ</name>